<accession>Q587J7</accession>
<name>TDR12_HUMAN</name>
<gene>
    <name type="primary">TDRD12</name>
    <name type="synonym">ECAT8</name>
</gene>
<organism>
    <name type="scientific">Homo sapiens</name>
    <name type="common">Human</name>
    <dbReference type="NCBI Taxonomy" id="9606"/>
    <lineage>
        <taxon>Eukaryota</taxon>
        <taxon>Metazoa</taxon>
        <taxon>Chordata</taxon>
        <taxon>Craniata</taxon>
        <taxon>Vertebrata</taxon>
        <taxon>Euteleostomi</taxon>
        <taxon>Mammalia</taxon>
        <taxon>Eutheria</taxon>
        <taxon>Euarchontoglires</taxon>
        <taxon>Primates</taxon>
        <taxon>Haplorrhini</taxon>
        <taxon>Catarrhini</taxon>
        <taxon>Hominidae</taxon>
        <taxon>Homo</taxon>
    </lineage>
</organism>
<evidence type="ECO:0000250" key="1"/>
<evidence type="ECO:0000250" key="2">
    <source>
        <dbReference type="UniProtKB" id="Q9CWU0"/>
    </source>
</evidence>
<evidence type="ECO:0000256" key="3">
    <source>
        <dbReference type="SAM" id="MobiDB-lite"/>
    </source>
</evidence>
<evidence type="ECO:0000303" key="4">
    <source>
    </source>
</evidence>
<evidence type="ECO:0000305" key="5"/>
<feature type="chain" id="PRO_0000311968" description="Putative ATP-dependent RNA helicase TDRD12">
    <location>
        <begin position="1"/>
        <end position="1177"/>
    </location>
</feature>
<feature type="domain" description="Tudor 1">
    <location>
        <begin position="56"/>
        <end position="118"/>
    </location>
</feature>
<feature type="domain" description="Helicase ATP-binding">
    <location>
        <begin position="447"/>
        <end position="635"/>
    </location>
</feature>
<feature type="domain" description="Tudor 2">
    <location>
        <begin position="900"/>
        <end position="999"/>
    </location>
</feature>
<feature type="region of interest" description="Disordered" evidence="3">
    <location>
        <begin position="1098"/>
        <end position="1177"/>
    </location>
</feature>
<feature type="short sequence motif" description="DEAH box">
    <location>
        <begin position="574"/>
        <end position="577"/>
    </location>
</feature>
<feature type="compositionally biased region" description="Polar residues" evidence="3">
    <location>
        <begin position="1100"/>
        <end position="1115"/>
    </location>
</feature>
<feature type="binding site" evidence="1">
    <location>
        <begin position="460"/>
        <end position="467"/>
    </location>
    <ligand>
        <name>ATP</name>
        <dbReference type="ChEBI" id="CHEBI:30616"/>
    </ligand>
</feature>
<feature type="splice variant" id="VSP_029675" description="In isoform 2." evidence="4">
    <original>L</original>
    <variation>T</variation>
    <location>
        <position position="395"/>
    </location>
</feature>
<feature type="splice variant" id="VSP_029676" description="In isoform 2." evidence="4">
    <location>
        <begin position="396"/>
        <end position="1177"/>
    </location>
</feature>
<feature type="sequence conflict" description="In Ref. 3; BAD95490." evidence="5" ref="3">
    <original>K</original>
    <variation>Q</variation>
    <location>
        <position position="8"/>
    </location>
</feature>
<feature type="sequence conflict" description="In Ref. 3; BAD95490." evidence="5" ref="3">
    <original>N</original>
    <variation>S</variation>
    <location>
        <position position="107"/>
    </location>
</feature>
<feature type="sequence conflict" description="In Ref. 2; BC049000." evidence="5" ref="2">
    <original>K</original>
    <variation>E</variation>
    <location>
        <position position="413"/>
    </location>
</feature>
<proteinExistence type="evidence at protein level"/>
<reference key="1">
    <citation type="journal article" date="2004" name="Nature">
        <title>The DNA sequence and biology of human chromosome 19.</title>
        <authorList>
            <person name="Grimwood J."/>
            <person name="Gordon L.A."/>
            <person name="Olsen A.S."/>
            <person name="Terry A."/>
            <person name="Schmutz J."/>
            <person name="Lamerdin J.E."/>
            <person name="Hellsten U."/>
            <person name="Goodstein D."/>
            <person name="Couronne O."/>
            <person name="Tran-Gyamfi M."/>
            <person name="Aerts A."/>
            <person name="Altherr M."/>
            <person name="Ashworth L."/>
            <person name="Bajorek E."/>
            <person name="Black S."/>
            <person name="Branscomb E."/>
            <person name="Caenepeel S."/>
            <person name="Carrano A.V."/>
            <person name="Caoile C."/>
            <person name="Chan Y.M."/>
            <person name="Christensen M."/>
            <person name="Cleland C.A."/>
            <person name="Copeland A."/>
            <person name="Dalin E."/>
            <person name="Dehal P."/>
            <person name="Denys M."/>
            <person name="Detter J.C."/>
            <person name="Escobar J."/>
            <person name="Flowers D."/>
            <person name="Fotopulos D."/>
            <person name="Garcia C."/>
            <person name="Georgescu A.M."/>
            <person name="Glavina T."/>
            <person name="Gomez M."/>
            <person name="Gonzales E."/>
            <person name="Groza M."/>
            <person name="Hammon N."/>
            <person name="Hawkins T."/>
            <person name="Haydu L."/>
            <person name="Ho I."/>
            <person name="Huang W."/>
            <person name="Israni S."/>
            <person name="Jett J."/>
            <person name="Kadner K."/>
            <person name="Kimball H."/>
            <person name="Kobayashi A."/>
            <person name="Larionov V."/>
            <person name="Leem S.-H."/>
            <person name="Lopez F."/>
            <person name="Lou Y."/>
            <person name="Lowry S."/>
            <person name="Malfatti S."/>
            <person name="Martinez D."/>
            <person name="McCready P.M."/>
            <person name="Medina C."/>
            <person name="Morgan J."/>
            <person name="Nelson K."/>
            <person name="Nolan M."/>
            <person name="Ovcharenko I."/>
            <person name="Pitluck S."/>
            <person name="Pollard M."/>
            <person name="Popkie A.P."/>
            <person name="Predki P."/>
            <person name="Quan G."/>
            <person name="Ramirez L."/>
            <person name="Rash S."/>
            <person name="Retterer J."/>
            <person name="Rodriguez A."/>
            <person name="Rogers S."/>
            <person name="Salamov A."/>
            <person name="Salazar A."/>
            <person name="She X."/>
            <person name="Smith D."/>
            <person name="Slezak T."/>
            <person name="Solovyev V."/>
            <person name="Thayer N."/>
            <person name="Tice H."/>
            <person name="Tsai M."/>
            <person name="Ustaszewska A."/>
            <person name="Vo N."/>
            <person name="Wagner M."/>
            <person name="Wheeler J."/>
            <person name="Wu K."/>
            <person name="Xie G."/>
            <person name="Yang J."/>
            <person name="Dubchak I."/>
            <person name="Furey T.S."/>
            <person name="DeJong P."/>
            <person name="Dickson M."/>
            <person name="Gordon D."/>
            <person name="Eichler E.E."/>
            <person name="Pennacchio L.A."/>
            <person name="Richardson P."/>
            <person name="Stubbs L."/>
            <person name="Rokhsar D.S."/>
            <person name="Myers R.M."/>
            <person name="Rubin E.M."/>
            <person name="Lucas S.M."/>
        </authorList>
    </citation>
    <scope>NUCLEOTIDE SEQUENCE [LARGE SCALE GENOMIC DNA]</scope>
</reference>
<reference key="2">
    <citation type="journal article" date="2004" name="Genome Res.">
        <title>The status, quality, and expansion of the NIH full-length cDNA project: the Mammalian Gene Collection (MGC).</title>
        <authorList>
            <consortium name="The MGC Project Team"/>
        </authorList>
    </citation>
    <scope>NUCLEOTIDE SEQUENCE [LARGE SCALE MRNA] (ISOFORM 1)</scope>
    <source>
        <tissue>Testis</tissue>
    </source>
</reference>
<reference key="3">
    <citation type="journal article" date="2003" name="Cell">
        <title>The homeoprotein Nanog is required for maintenance of pluripotency in mouse epiblast and ES cells.</title>
        <authorList>
            <person name="Mitsui K."/>
            <person name="Tokuzawa Y."/>
            <person name="Itoh H."/>
            <person name="Segawa K."/>
            <person name="Murakami M."/>
            <person name="Takahashi K."/>
            <person name="Maruyama M."/>
            <person name="Maeda M."/>
            <person name="Yamanaka S."/>
        </authorList>
    </citation>
    <scope>NUCLEOTIDE SEQUENCE [MRNA] OF 7-1177 (ISOFORM 2)</scope>
</reference>
<dbReference type="EC" id="3.6.4.13"/>
<dbReference type="EMBL" id="AC008736">
    <property type="status" value="NOT_ANNOTATED_CDS"/>
    <property type="molecule type" value="Genomic_DNA"/>
</dbReference>
<dbReference type="EMBL" id="AC008805">
    <property type="status" value="NOT_ANNOTATED_CDS"/>
    <property type="molecule type" value="Genomic_DNA"/>
</dbReference>
<dbReference type="EMBL" id="BC049000">
    <property type="status" value="NOT_ANNOTATED_CDS"/>
    <property type="molecule type" value="mRNA"/>
</dbReference>
<dbReference type="EMBL" id="AB211063">
    <property type="protein sequence ID" value="BAD95490.1"/>
    <property type="status" value="ALT_INIT"/>
    <property type="molecule type" value="mRNA"/>
</dbReference>
<dbReference type="CCDS" id="CCDS46038.1">
    <molecule id="Q587J7-2"/>
</dbReference>
<dbReference type="RefSeq" id="NP_001104292.1">
    <molecule id="Q587J7-2"/>
    <property type="nucleotide sequence ID" value="NM_001110822.2"/>
</dbReference>
<dbReference type="SMR" id="Q587J7"/>
<dbReference type="BioGRID" id="124857">
    <property type="interactions" value="2"/>
</dbReference>
<dbReference type="FunCoup" id="Q587J7">
    <property type="interactions" value="43"/>
</dbReference>
<dbReference type="IntAct" id="Q587J7">
    <property type="interactions" value="3"/>
</dbReference>
<dbReference type="MINT" id="Q587J7"/>
<dbReference type="STRING" id="9606.ENSP00000390621"/>
<dbReference type="CarbonylDB" id="Q587J7"/>
<dbReference type="iPTMnet" id="Q587J7"/>
<dbReference type="PhosphoSitePlus" id="Q587J7"/>
<dbReference type="BioMuta" id="TDRD12"/>
<dbReference type="DMDM" id="162416281"/>
<dbReference type="jPOST" id="Q587J7"/>
<dbReference type="MassIVE" id="Q587J7"/>
<dbReference type="PaxDb" id="9606-ENSP00000390621"/>
<dbReference type="PeptideAtlas" id="Q587J7"/>
<dbReference type="ProteomicsDB" id="62600">
    <molecule id="Q587J7-1"/>
</dbReference>
<dbReference type="ProteomicsDB" id="62601">
    <molecule id="Q587J7-2"/>
</dbReference>
<dbReference type="Antibodypedia" id="47944">
    <property type="antibodies" value="42 antibodies from 11 providers"/>
</dbReference>
<dbReference type="DNASU" id="91646"/>
<dbReference type="Ensembl" id="ENST00000421545.2">
    <molecule id="Q587J7-2"/>
    <property type="protein sequence ID" value="ENSP00000390621.2"/>
    <property type="gene ID" value="ENSG00000173809.18"/>
</dbReference>
<dbReference type="Ensembl" id="ENST00000444215.6">
    <molecule id="Q587J7-1"/>
    <property type="protein sequence ID" value="ENSP00000416248.2"/>
    <property type="gene ID" value="ENSG00000173809.18"/>
</dbReference>
<dbReference type="GeneID" id="91646"/>
<dbReference type="KEGG" id="hsa:91646"/>
<dbReference type="UCSC" id="uc002ntq.3">
    <molecule id="Q587J7-1"/>
    <property type="organism name" value="human"/>
</dbReference>
<dbReference type="AGR" id="HGNC:25044"/>
<dbReference type="CTD" id="91646"/>
<dbReference type="DisGeNET" id="91646"/>
<dbReference type="GeneCards" id="TDRD12"/>
<dbReference type="HGNC" id="HGNC:25044">
    <property type="gene designation" value="TDRD12"/>
</dbReference>
<dbReference type="HPA" id="ENSG00000173809">
    <property type="expression patterns" value="Tissue enriched (testis)"/>
</dbReference>
<dbReference type="neXtProt" id="NX_Q587J7"/>
<dbReference type="OpenTargets" id="ENSG00000173809"/>
<dbReference type="PharmGKB" id="PA162405542"/>
<dbReference type="VEuPathDB" id="HostDB:ENSG00000173809"/>
<dbReference type="eggNOG" id="KOG0331">
    <property type="taxonomic scope" value="Eukaryota"/>
</dbReference>
<dbReference type="GeneTree" id="ENSGT00420000029847"/>
<dbReference type="HOGENOM" id="CLU_008124_0_0_1"/>
<dbReference type="InParanoid" id="Q587J7"/>
<dbReference type="OrthoDB" id="249932at2759"/>
<dbReference type="PAN-GO" id="Q587J7">
    <property type="GO annotations" value="0 GO annotations based on evolutionary models"/>
</dbReference>
<dbReference type="PhylomeDB" id="Q587J7"/>
<dbReference type="TreeFam" id="TF332354"/>
<dbReference type="PathwayCommons" id="Q587J7"/>
<dbReference type="Reactome" id="R-HSA-5601884">
    <property type="pathway name" value="PIWI-interacting RNA (piRNA) biogenesis"/>
</dbReference>
<dbReference type="SignaLink" id="Q587J7"/>
<dbReference type="BioGRID-ORCS" id="91646">
    <property type="hits" value="8 hits in 1139 CRISPR screens"/>
</dbReference>
<dbReference type="ChiTaRS" id="TDRD12">
    <property type="organism name" value="human"/>
</dbReference>
<dbReference type="GenomeRNAi" id="91646"/>
<dbReference type="Pharos" id="Q587J7">
    <property type="development level" value="Tdark"/>
</dbReference>
<dbReference type="PRO" id="PR:Q587J7"/>
<dbReference type="Proteomes" id="UP000005640">
    <property type="component" value="Chromosome 19"/>
</dbReference>
<dbReference type="RNAct" id="Q587J7">
    <property type="molecule type" value="protein"/>
</dbReference>
<dbReference type="Bgee" id="ENSG00000173809">
    <property type="expression patterns" value="Expressed in primordial germ cell in gonad and 125 other cell types or tissues"/>
</dbReference>
<dbReference type="ExpressionAtlas" id="Q587J7">
    <property type="expression patterns" value="baseline and differential"/>
</dbReference>
<dbReference type="GO" id="GO:1990923">
    <property type="term" value="C:PET complex"/>
    <property type="evidence" value="ECO:0000250"/>
    <property type="project" value="UniProtKB"/>
</dbReference>
<dbReference type="GO" id="GO:0005524">
    <property type="term" value="F:ATP binding"/>
    <property type="evidence" value="ECO:0007669"/>
    <property type="project" value="UniProtKB-KW"/>
</dbReference>
<dbReference type="GO" id="GO:0016887">
    <property type="term" value="F:ATP hydrolysis activity"/>
    <property type="evidence" value="ECO:0007669"/>
    <property type="project" value="RHEA"/>
</dbReference>
<dbReference type="GO" id="GO:0003676">
    <property type="term" value="F:nucleic acid binding"/>
    <property type="evidence" value="ECO:0007669"/>
    <property type="project" value="InterPro"/>
</dbReference>
<dbReference type="GO" id="GO:0003724">
    <property type="term" value="F:RNA helicase activity"/>
    <property type="evidence" value="ECO:0007669"/>
    <property type="project" value="UniProtKB-EC"/>
</dbReference>
<dbReference type="GO" id="GO:0009566">
    <property type="term" value="P:fertilization"/>
    <property type="evidence" value="ECO:0000250"/>
    <property type="project" value="UniProtKB"/>
</dbReference>
<dbReference type="GO" id="GO:0042078">
    <property type="term" value="P:germ-line stem cell division"/>
    <property type="evidence" value="ECO:0000318"/>
    <property type="project" value="GO_Central"/>
</dbReference>
<dbReference type="GO" id="GO:0007140">
    <property type="term" value="P:male meiotic nuclear division"/>
    <property type="evidence" value="ECO:0000250"/>
    <property type="project" value="UniProtKB"/>
</dbReference>
<dbReference type="GO" id="GO:0034587">
    <property type="term" value="P:piRNA processing"/>
    <property type="evidence" value="ECO:0000250"/>
    <property type="project" value="UniProtKB"/>
</dbReference>
<dbReference type="GO" id="GO:0007283">
    <property type="term" value="P:spermatogenesis"/>
    <property type="evidence" value="ECO:0000250"/>
    <property type="project" value="UniProtKB"/>
</dbReference>
<dbReference type="GO" id="GO:0141196">
    <property type="term" value="P:transposable element silencing by piRNA-mediated DNA methylation"/>
    <property type="evidence" value="ECO:0000250"/>
    <property type="project" value="UniProtKB"/>
</dbReference>
<dbReference type="CDD" id="cd20434">
    <property type="entry name" value="Tudor_TDRD12_rpt1"/>
    <property type="match status" value="1"/>
</dbReference>
<dbReference type="CDD" id="cd20435">
    <property type="entry name" value="Tudor_TDRD12_rpt2"/>
    <property type="match status" value="1"/>
</dbReference>
<dbReference type="FunFam" id="2.30.30.140:FF:000087">
    <property type="entry name" value="Putative ATP-dependent RNA helicase TDRD12"/>
    <property type="match status" value="1"/>
</dbReference>
<dbReference type="FunFam" id="3.40.50.300:FF:001517">
    <property type="entry name" value="Putative ATP-dependent RNA helicase TDRD12"/>
    <property type="match status" value="1"/>
</dbReference>
<dbReference type="FunFam" id="2.30.30.140:FF:000075">
    <property type="entry name" value="putative ATP-dependent RNA helicase TDRD12"/>
    <property type="match status" value="1"/>
</dbReference>
<dbReference type="FunFam" id="2.40.50.90:FF:000021">
    <property type="entry name" value="putative ATP-dependent RNA helicase TDRD12"/>
    <property type="match status" value="1"/>
</dbReference>
<dbReference type="FunFam" id="3.40.50.300:FF:001416">
    <property type="entry name" value="Tudor domain containing 12"/>
    <property type="match status" value="1"/>
</dbReference>
<dbReference type="Gene3D" id="2.30.30.140">
    <property type="match status" value="2"/>
</dbReference>
<dbReference type="Gene3D" id="2.40.50.90">
    <property type="match status" value="2"/>
</dbReference>
<dbReference type="Gene3D" id="3.40.50.300">
    <property type="entry name" value="P-loop containing nucleotide triphosphate hydrolases"/>
    <property type="match status" value="2"/>
</dbReference>
<dbReference type="InterPro" id="IPR011545">
    <property type="entry name" value="DEAD/DEAH_box_helicase_dom"/>
</dbReference>
<dbReference type="InterPro" id="IPR027417">
    <property type="entry name" value="P-loop_NTPase"/>
</dbReference>
<dbReference type="InterPro" id="IPR035437">
    <property type="entry name" value="SNase_OB-fold_sf"/>
</dbReference>
<dbReference type="InterPro" id="IPR002999">
    <property type="entry name" value="Tudor"/>
</dbReference>
<dbReference type="InterPro" id="IPR047390">
    <property type="entry name" value="Tudor_TDRD12_rpt1"/>
</dbReference>
<dbReference type="PANTHER" id="PTHR22655">
    <property type="entry name" value="ATP-DEPENDENT RNA HELICASE TDRD12-RELATED"/>
    <property type="match status" value="1"/>
</dbReference>
<dbReference type="PANTHER" id="PTHR22655:SF2">
    <property type="entry name" value="ATP-DEPENDENT RNA HELICASE TDRD12-RELATED"/>
    <property type="match status" value="1"/>
</dbReference>
<dbReference type="Pfam" id="PF00270">
    <property type="entry name" value="DEAD"/>
    <property type="match status" value="1"/>
</dbReference>
<dbReference type="Pfam" id="PF00567">
    <property type="entry name" value="TUDOR"/>
    <property type="match status" value="2"/>
</dbReference>
<dbReference type="SUPFAM" id="SSF52540">
    <property type="entry name" value="P-loop containing nucleoside triphosphate hydrolases"/>
    <property type="match status" value="2"/>
</dbReference>
<dbReference type="SUPFAM" id="SSF63748">
    <property type="entry name" value="Tudor/PWWP/MBT"/>
    <property type="match status" value="2"/>
</dbReference>
<comment type="function">
    <text evidence="2">Probable ATP-binding RNA helicase required during spermatogenesis to repress transposable elements and preventing their mobilization, which is essential for the germline integrity. Acts via the piRNA metabolic process, which mediates the repression of transposable elements during meiosis by forming complexes composed of piRNAs and Piwi proteins and governs the methylation and subsequent repression of transposons. Involved in the secondary piRNAs metabolic process. Acts via the PET complex, a multiprotein complex required during the secondary piRNAs metabolic process for the PIWIL2 slicing-triggered loading of PIWIL4 piRNAs.</text>
</comment>
<comment type="catalytic activity">
    <reaction>
        <text>ATP + H2O = ADP + phosphate + H(+)</text>
        <dbReference type="Rhea" id="RHEA:13065"/>
        <dbReference type="ChEBI" id="CHEBI:15377"/>
        <dbReference type="ChEBI" id="CHEBI:15378"/>
        <dbReference type="ChEBI" id="CHEBI:30616"/>
        <dbReference type="ChEBI" id="CHEBI:43474"/>
        <dbReference type="ChEBI" id="CHEBI:456216"/>
        <dbReference type="EC" id="3.6.4.13"/>
    </reaction>
</comment>
<comment type="subunit">
    <text evidence="2">Component of a mRNP complex containing PIWIL2, TDRD1 and piRNAs. Component of the PET complex, at least composed of EXD1, PIWIL2, TDRD12 and piRNAs.</text>
</comment>
<comment type="alternative products">
    <event type="alternative splicing"/>
    <isoform>
        <id>Q587J7-1</id>
        <name>1</name>
        <sequence type="displayed"/>
    </isoform>
    <isoform>
        <id>Q587J7-2</id>
        <name>2</name>
        <sequence type="described" ref="VSP_029675 VSP_029676"/>
    </isoform>
</comment>
<comment type="sequence caution" evidence="5">
    <conflict type="erroneous initiation">
        <sequence resource="EMBL-CDS" id="BAD95490"/>
    </conflict>
    <text>Truncated N-terminus.</text>
</comment>
<sequence length="1177" mass="132578">MLQLLVLKIEDPGCFWVIIKGCSPFLDHDVDYQKLNSAMNDFYNSTCQDIEIKPLTLEEGQVCVVYCEELKCWCRAIVKSITSSADQYLAECFLVDFAKNIPVKSKNIRVVVESFMQLPYRAKKFSLYCTKPVTLHIDFCRDSTDIVPAKKWDNAAIQYFQNLLKATTQVEARLCAVEEDTFEVYLYVTIKDEKVCVNDDLVAKNYACYMSPTKNKNLDYLEKPRLNIKSAPSFNKLNPALTLWPMFLQGKDVQGMEDSHGVNFPAQSLQHTWCKGIVGDLRPTATAQDKAVKCNMDSLRDSPKDKSEKKHHCISLKDTNKRVESSVYWPAKRGITIYADPDVPEASALSQKSNEKPLRLTEKKEYDEKNSCVKLLQFLNPDPLRADGISDLQQLQKLKGLQPPVVVLRNKIKPCLTIDSSPLSADLKKALQRNKFPGPSHTESYSWPPIARGCDVVVISHCESNPLLYLLPVLTVLQTGACYKSLPSRNGPLAVIVCPGWKKAQFIFELLGEYSMSSRPLHPVLLTIGLHKEEAKNTKLPRGCDVIVTTPYSLLRLLACQSLLFLRLCHLILDEVEVLFLEANEQMFAILDNFKKNIEVEERESAPHQIVAVGVHWNKHIEHLIKEFMNDPYIVITAMEEAALYGNVQQVVHLCLECEKTSSLLQALDFIPSQAQKTLIFTCSVAETEIVCKVVESSSIFCLKMHKEMIFNLQNVLEQWKKKLSSGSQIILALTDDCVPLLAITDATCVIHFSFPASPKVFGGRLYCMSDHFHAEQGSPAEQGDKKAKSVLLLTEKDASHAVGVLRYLERADAKVPAELYEFTAGVLEAKEDKKAGRPLCPYLKAFGFCKDKRICPDRHRINPETDLPRKLSSQALPSFGYIKIIPFYILNATNYFGRIVDKHMDLYATLNAEMNEYFKDSNKTTVEKVEKFGLYGLAEKTLFHRVQVLEVNQKEDAWALDDILVEFIDEGRTGLVTRDQLLHLPEHFHTLPPQAVEFIVCRVKPADNEIEWNPKVTRYIHHKIVGKLHDAKVILALGNTVWIDPMVHITNLSSLKTSVIDYNVRAEILSMGMGIDNPEHIEQLKKLREDAKIPACEESLSQTPPRVTGTSPAQDQDHPSEEQGGQGTPPAEDAACLQSPQPEDTGAEGGAESKTSSENQKPGGYLVFKRWLSSNR</sequence>
<protein>
    <recommendedName>
        <fullName>Putative ATP-dependent RNA helicase TDRD12</fullName>
        <ecNumber>3.6.4.13</ecNumber>
    </recommendedName>
    <alternativeName>
        <fullName>ES cell-associated transcript 8 protein</fullName>
    </alternativeName>
    <alternativeName>
        <fullName>Tudor domain-containing protein 12</fullName>
    </alternativeName>
</protein>
<keyword id="KW-0025">Alternative splicing</keyword>
<keyword id="KW-0067">ATP-binding</keyword>
<keyword id="KW-0217">Developmental protein</keyword>
<keyword id="KW-0221">Differentiation</keyword>
<keyword id="KW-0347">Helicase</keyword>
<keyword id="KW-0378">Hydrolase</keyword>
<keyword id="KW-0469">Meiosis</keyword>
<keyword id="KW-0547">Nucleotide-binding</keyword>
<keyword id="KW-1267">Proteomics identification</keyword>
<keyword id="KW-1185">Reference proteome</keyword>
<keyword id="KW-0677">Repeat</keyword>
<keyword id="KW-0943">RNA-mediated gene silencing</keyword>
<keyword id="KW-0744">Spermatogenesis</keyword>